<organism>
    <name type="scientific">Arabidopsis thaliana</name>
    <name type="common">Mouse-ear cress</name>
    <dbReference type="NCBI Taxonomy" id="3702"/>
    <lineage>
        <taxon>Eukaryota</taxon>
        <taxon>Viridiplantae</taxon>
        <taxon>Streptophyta</taxon>
        <taxon>Embryophyta</taxon>
        <taxon>Tracheophyta</taxon>
        <taxon>Spermatophyta</taxon>
        <taxon>Magnoliopsida</taxon>
        <taxon>eudicotyledons</taxon>
        <taxon>Gunneridae</taxon>
        <taxon>Pentapetalae</taxon>
        <taxon>rosids</taxon>
        <taxon>malvids</taxon>
        <taxon>Brassicales</taxon>
        <taxon>Brassicaceae</taxon>
        <taxon>Camelineae</taxon>
        <taxon>Arabidopsis</taxon>
    </lineage>
</organism>
<comment type="catalytic activity">
    <reaction>
        <text>ATP + H2O = ADP + phosphate + H(+)</text>
        <dbReference type="Rhea" id="RHEA:13065"/>
        <dbReference type="ChEBI" id="CHEBI:15377"/>
        <dbReference type="ChEBI" id="CHEBI:15378"/>
        <dbReference type="ChEBI" id="CHEBI:30616"/>
        <dbReference type="ChEBI" id="CHEBI:43474"/>
        <dbReference type="ChEBI" id="CHEBI:456216"/>
        <dbReference type="EC" id="3.6.4.13"/>
    </reaction>
</comment>
<comment type="domain">
    <text>The Q motif is unique to and characteristic of the DEAD box family of RNA helicases and controls ATP binding and hydrolysis.</text>
</comment>
<comment type="similarity">
    <text evidence="4">Belongs to the DEAD box helicase family.</text>
</comment>
<comment type="sequence caution" evidence="4">
    <conflict type="erroneous gene model prediction">
        <sequence resource="EMBL-CDS" id="CAB39640"/>
    </conflict>
</comment>
<comment type="sequence caution" evidence="4">
    <conflict type="erroneous gene model prediction">
        <sequence resource="EMBL-CDS" id="CAB78096"/>
    </conflict>
</comment>
<reference key="1">
    <citation type="journal article" date="1999" name="Nature">
        <title>Sequence and analysis of chromosome 4 of the plant Arabidopsis thaliana.</title>
        <authorList>
            <person name="Mayer K.F.X."/>
            <person name="Schueller C."/>
            <person name="Wambutt R."/>
            <person name="Murphy G."/>
            <person name="Volckaert G."/>
            <person name="Pohl T."/>
            <person name="Duesterhoeft A."/>
            <person name="Stiekema W."/>
            <person name="Entian K.-D."/>
            <person name="Terryn N."/>
            <person name="Harris B."/>
            <person name="Ansorge W."/>
            <person name="Brandt P."/>
            <person name="Grivell L.A."/>
            <person name="Rieger M."/>
            <person name="Weichselgartner M."/>
            <person name="de Simone V."/>
            <person name="Obermaier B."/>
            <person name="Mache R."/>
            <person name="Mueller M."/>
            <person name="Kreis M."/>
            <person name="Delseny M."/>
            <person name="Puigdomenech P."/>
            <person name="Watson M."/>
            <person name="Schmidtheini T."/>
            <person name="Reichert B."/>
            <person name="Portetelle D."/>
            <person name="Perez-Alonso M."/>
            <person name="Boutry M."/>
            <person name="Bancroft I."/>
            <person name="Vos P."/>
            <person name="Hoheisel J."/>
            <person name="Zimmermann W."/>
            <person name="Wedler H."/>
            <person name="Ridley P."/>
            <person name="Langham S.-A."/>
            <person name="McCullagh B."/>
            <person name="Bilham L."/>
            <person name="Robben J."/>
            <person name="van der Schueren J."/>
            <person name="Grymonprez B."/>
            <person name="Chuang Y.-J."/>
            <person name="Vandenbussche F."/>
            <person name="Braeken M."/>
            <person name="Weltjens I."/>
            <person name="Voet M."/>
            <person name="Bastiaens I."/>
            <person name="Aert R."/>
            <person name="Defoor E."/>
            <person name="Weitzenegger T."/>
            <person name="Bothe G."/>
            <person name="Ramsperger U."/>
            <person name="Hilbert H."/>
            <person name="Braun M."/>
            <person name="Holzer E."/>
            <person name="Brandt A."/>
            <person name="Peters S."/>
            <person name="van Staveren M."/>
            <person name="Dirkse W."/>
            <person name="Mooijman P."/>
            <person name="Klein Lankhorst R."/>
            <person name="Rose M."/>
            <person name="Hauf J."/>
            <person name="Koetter P."/>
            <person name="Berneiser S."/>
            <person name="Hempel S."/>
            <person name="Feldpausch M."/>
            <person name="Lamberth S."/>
            <person name="Van den Daele H."/>
            <person name="De Keyser A."/>
            <person name="Buysshaert C."/>
            <person name="Gielen J."/>
            <person name="Villarroel R."/>
            <person name="De Clercq R."/>
            <person name="van Montagu M."/>
            <person name="Rogers J."/>
            <person name="Cronin A."/>
            <person name="Quail M.A."/>
            <person name="Bray-Allen S."/>
            <person name="Clark L."/>
            <person name="Doggett J."/>
            <person name="Hall S."/>
            <person name="Kay M."/>
            <person name="Lennard N."/>
            <person name="McLay K."/>
            <person name="Mayes R."/>
            <person name="Pettett A."/>
            <person name="Rajandream M.A."/>
            <person name="Lyne M."/>
            <person name="Benes V."/>
            <person name="Rechmann S."/>
            <person name="Borkova D."/>
            <person name="Bloecker H."/>
            <person name="Scharfe M."/>
            <person name="Grimm M."/>
            <person name="Loehnert T.-H."/>
            <person name="Dose S."/>
            <person name="de Haan M."/>
            <person name="Maarse A.C."/>
            <person name="Schaefer M."/>
            <person name="Mueller-Auer S."/>
            <person name="Gabel C."/>
            <person name="Fuchs M."/>
            <person name="Fartmann B."/>
            <person name="Granderath K."/>
            <person name="Dauner D."/>
            <person name="Herzl A."/>
            <person name="Neumann S."/>
            <person name="Argiriou A."/>
            <person name="Vitale D."/>
            <person name="Liguori R."/>
            <person name="Piravandi E."/>
            <person name="Massenet O."/>
            <person name="Quigley F."/>
            <person name="Clabauld G."/>
            <person name="Muendlein A."/>
            <person name="Felber R."/>
            <person name="Schnabl S."/>
            <person name="Hiller R."/>
            <person name="Schmidt W."/>
            <person name="Lecharny A."/>
            <person name="Aubourg S."/>
            <person name="Chefdor F."/>
            <person name="Cooke R."/>
            <person name="Berger C."/>
            <person name="Monfort A."/>
            <person name="Casacuberta E."/>
            <person name="Gibbons T."/>
            <person name="Weber N."/>
            <person name="Vandenbol M."/>
            <person name="Bargues M."/>
            <person name="Terol J."/>
            <person name="Torres A."/>
            <person name="Perez-Perez A."/>
            <person name="Purnelle B."/>
            <person name="Bent E."/>
            <person name="Johnson S."/>
            <person name="Tacon D."/>
            <person name="Jesse T."/>
            <person name="Heijnen L."/>
            <person name="Schwarz S."/>
            <person name="Scholler P."/>
            <person name="Heber S."/>
            <person name="Francs P."/>
            <person name="Bielke C."/>
            <person name="Frishman D."/>
            <person name="Haase D."/>
            <person name="Lemcke K."/>
            <person name="Mewes H.-W."/>
            <person name="Stocker S."/>
            <person name="Zaccaria P."/>
            <person name="Bevan M."/>
            <person name="Wilson R.K."/>
            <person name="de la Bastide M."/>
            <person name="Habermann K."/>
            <person name="Parnell L."/>
            <person name="Dedhia N."/>
            <person name="Gnoj L."/>
            <person name="Schutz K."/>
            <person name="Huang E."/>
            <person name="Spiegel L."/>
            <person name="Sekhon M."/>
            <person name="Murray J."/>
            <person name="Sheet P."/>
            <person name="Cordes M."/>
            <person name="Abu-Threideh J."/>
            <person name="Stoneking T."/>
            <person name="Kalicki J."/>
            <person name="Graves T."/>
            <person name="Harmon G."/>
            <person name="Edwards J."/>
            <person name="Latreille P."/>
            <person name="Courtney L."/>
            <person name="Cloud J."/>
            <person name="Abbott A."/>
            <person name="Scott K."/>
            <person name="Johnson D."/>
            <person name="Minx P."/>
            <person name="Bentley D."/>
            <person name="Fulton B."/>
            <person name="Miller N."/>
            <person name="Greco T."/>
            <person name="Kemp K."/>
            <person name="Kramer J."/>
            <person name="Fulton L."/>
            <person name="Mardis E."/>
            <person name="Dante M."/>
            <person name="Pepin K."/>
            <person name="Hillier L.W."/>
            <person name="Nelson J."/>
            <person name="Spieth J."/>
            <person name="Ryan E."/>
            <person name="Andrews S."/>
            <person name="Geisel C."/>
            <person name="Layman D."/>
            <person name="Du H."/>
            <person name="Ali J."/>
            <person name="Berghoff A."/>
            <person name="Jones K."/>
            <person name="Drone K."/>
            <person name="Cotton M."/>
            <person name="Joshu C."/>
            <person name="Antonoiu B."/>
            <person name="Zidanic M."/>
            <person name="Strong C."/>
            <person name="Sun H."/>
            <person name="Lamar B."/>
            <person name="Yordan C."/>
            <person name="Ma P."/>
            <person name="Zhong J."/>
            <person name="Preston R."/>
            <person name="Vil D."/>
            <person name="Shekher M."/>
            <person name="Matero A."/>
            <person name="Shah R."/>
            <person name="Swaby I.K."/>
            <person name="O'Shaughnessy A."/>
            <person name="Rodriguez M."/>
            <person name="Hoffman J."/>
            <person name="Till S."/>
            <person name="Granat S."/>
            <person name="Shohdy N."/>
            <person name="Hasegawa A."/>
            <person name="Hameed A."/>
            <person name="Lodhi M."/>
            <person name="Johnson A."/>
            <person name="Chen E."/>
            <person name="Marra M.A."/>
            <person name="Martienssen R."/>
            <person name="McCombie W.R."/>
        </authorList>
    </citation>
    <scope>NUCLEOTIDE SEQUENCE [LARGE SCALE GENOMIC DNA]</scope>
    <source>
        <strain>cv. Columbia</strain>
    </source>
</reference>
<reference key="2">
    <citation type="journal article" date="2017" name="Plant J.">
        <title>Araport11: a complete reannotation of the Arabidopsis thaliana reference genome.</title>
        <authorList>
            <person name="Cheng C.Y."/>
            <person name="Krishnakumar V."/>
            <person name="Chan A.P."/>
            <person name="Thibaud-Nissen F."/>
            <person name="Schobel S."/>
            <person name="Town C.D."/>
        </authorList>
    </citation>
    <scope>GENOME REANNOTATION</scope>
    <source>
        <strain>cv. Columbia</strain>
    </source>
</reference>
<reference key="3">
    <citation type="journal article" date="2003" name="Science">
        <title>Empirical analysis of transcriptional activity in the Arabidopsis genome.</title>
        <authorList>
            <person name="Yamada K."/>
            <person name="Lim J."/>
            <person name="Dale J.M."/>
            <person name="Chen H."/>
            <person name="Shinn P."/>
            <person name="Palm C.J."/>
            <person name="Southwick A.M."/>
            <person name="Wu H.C."/>
            <person name="Kim C.J."/>
            <person name="Nguyen M."/>
            <person name="Pham P.K."/>
            <person name="Cheuk R.F."/>
            <person name="Karlin-Newmann G."/>
            <person name="Liu S.X."/>
            <person name="Lam B."/>
            <person name="Sakano H."/>
            <person name="Wu T."/>
            <person name="Yu G."/>
            <person name="Miranda M."/>
            <person name="Quach H.L."/>
            <person name="Tripp M."/>
            <person name="Chang C.H."/>
            <person name="Lee J.M."/>
            <person name="Toriumi M.J."/>
            <person name="Chan M.M."/>
            <person name="Tang C.C."/>
            <person name="Onodera C.S."/>
            <person name="Deng J.M."/>
            <person name="Akiyama K."/>
            <person name="Ansari Y."/>
            <person name="Arakawa T."/>
            <person name="Banh J."/>
            <person name="Banno F."/>
            <person name="Bowser L."/>
            <person name="Brooks S.Y."/>
            <person name="Carninci P."/>
            <person name="Chao Q."/>
            <person name="Choy N."/>
            <person name="Enju A."/>
            <person name="Goldsmith A.D."/>
            <person name="Gurjal M."/>
            <person name="Hansen N.F."/>
            <person name="Hayashizaki Y."/>
            <person name="Johnson-Hopson C."/>
            <person name="Hsuan V.W."/>
            <person name="Iida K."/>
            <person name="Karnes M."/>
            <person name="Khan S."/>
            <person name="Koesema E."/>
            <person name="Ishida J."/>
            <person name="Jiang P.X."/>
            <person name="Jones T."/>
            <person name="Kawai J."/>
            <person name="Kamiya A."/>
            <person name="Meyers C."/>
            <person name="Nakajima M."/>
            <person name="Narusaka M."/>
            <person name="Seki M."/>
            <person name="Sakurai T."/>
            <person name="Satou M."/>
            <person name="Tamse R."/>
            <person name="Vaysberg M."/>
            <person name="Wallender E.K."/>
            <person name="Wong C."/>
            <person name="Yamamura Y."/>
            <person name="Yuan S."/>
            <person name="Shinozaki K."/>
            <person name="Davis R.W."/>
            <person name="Theologis A."/>
            <person name="Ecker J.R."/>
        </authorList>
    </citation>
    <scope>NUCLEOTIDE SEQUENCE [LARGE SCALE MRNA]</scope>
    <source>
        <strain>cv. Columbia</strain>
    </source>
</reference>
<reference key="4">
    <citation type="submission" date="2005-03" db="EMBL/GenBank/DDBJ databases">
        <title>Large-scale analysis of RIKEN Arabidopsis full-length (RAFL) cDNAs.</title>
        <authorList>
            <person name="Totoki Y."/>
            <person name="Seki M."/>
            <person name="Ishida J."/>
            <person name="Nakajima M."/>
            <person name="Enju A."/>
            <person name="Kamiya A."/>
            <person name="Narusaka M."/>
            <person name="Shin-i T."/>
            <person name="Nakagawa M."/>
            <person name="Sakamoto N."/>
            <person name="Oishi K."/>
            <person name="Kohara Y."/>
            <person name="Kobayashi M."/>
            <person name="Toyoda A."/>
            <person name="Sakaki Y."/>
            <person name="Sakurai T."/>
            <person name="Iida K."/>
            <person name="Akiyama K."/>
            <person name="Satou M."/>
            <person name="Toyoda T."/>
            <person name="Konagaya A."/>
            <person name="Carninci P."/>
            <person name="Kawai J."/>
            <person name="Hayashizaki Y."/>
            <person name="Shinozaki K."/>
        </authorList>
    </citation>
    <scope>NUCLEOTIDE SEQUENCE [LARGE SCALE MRNA]</scope>
    <source>
        <strain>cv. Columbia</strain>
    </source>
</reference>
<reference key="5">
    <citation type="journal article" date="2004" name="Plant Biotechnol. J.">
        <title>DEAD-box RNA helicases in Arabidopsis thaliana: establishing a link between quantitative expression, gene structure and evolution of a family of genes.</title>
        <authorList>
            <person name="Mingam A."/>
            <person name="Toffano-Nioche C."/>
            <person name="Brunaud V."/>
            <person name="Boudet N."/>
            <person name="Kreis M."/>
            <person name="Lecharny A."/>
        </authorList>
    </citation>
    <scope>GENE FAMILY</scope>
    <scope>NOMENCLATURE</scope>
</reference>
<reference key="6">
    <citation type="journal article" date="2013" name="PLoS ONE">
        <title>Genome-wide comparative in silico analysis of the RNA helicase gene family in Zea mays and Glycine max: a comparison with Arabidopsis and Oryza sativa.</title>
        <authorList>
            <person name="Xu R."/>
            <person name="Zhang S."/>
            <person name="Huang J."/>
            <person name="Zheng C."/>
        </authorList>
    </citation>
    <scope>GENE FAMILY</scope>
</reference>
<protein>
    <recommendedName>
        <fullName>DEAD-box ATP-dependent RNA helicase 39</fullName>
        <ecNumber>3.6.4.13</ecNumber>
    </recommendedName>
</protein>
<dbReference type="EC" id="3.6.4.13"/>
<dbReference type="EMBL" id="AL049482">
    <property type="protein sequence ID" value="CAB39640.1"/>
    <property type="status" value="ALT_SEQ"/>
    <property type="molecule type" value="Genomic_DNA"/>
</dbReference>
<dbReference type="EMBL" id="AL161515">
    <property type="protein sequence ID" value="CAB78096.1"/>
    <property type="status" value="ALT_SEQ"/>
    <property type="molecule type" value="Genomic_DNA"/>
</dbReference>
<dbReference type="EMBL" id="CP002687">
    <property type="protein sequence ID" value="AEE82787.1"/>
    <property type="molecule type" value="Genomic_DNA"/>
</dbReference>
<dbReference type="EMBL" id="BT010574">
    <property type="protein sequence ID" value="AAQ65197.1"/>
    <property type="molecule type" value="mRNA"/>
</dbReference>
<dbReference type="EMBL" id="AK175347">
    <property type="protein sequence ID" value="BAD43110.1"/>
    <property type="molecule type" value="mRNA"/>
</dbReference>
<dbReference type="EMBL" id="AK175353">
    <property type="protein sequence ID" value="BAD43116.1"/>
    <property type="molecule type" value="mRNA"/>
</dbReference>
<dbReference type="EMBL" id="AK175435">
    <property type="protein sequence ID" value="BAD43198.1"/>
    <property type="molecule type" value="mRNA"/>
</dbReference>
<dbReference type="EMBL" id="AK175766">
    <property type="protein sequence ID" value="BAD43529.1"/>
    <property type="molecule type" value="mRNA"/>
</dbReference>
<dbReference type="EMBL" id="AK221801">
    <property type="protein sequence ID" value="BAD93963.1"/>
    <property type="molecule type" value="mRNA"/>
</dbReference>
<dbReference type="PIR" id="T04020">
    <property type="entry name" value="T04020"/>
</dbReference>
<dbReference type="RefSeq" id="NP_849348.1">
    <property type="nucleotide sequence ID" value="NM_179017.3"/>
</dbReference>
<dbReference type="SMR" id="Q56X76"/>
<dbReference type="FunCoup" id="Q56X76">
    <property type="interactions" value="3234"/>
</dbReference>
<dbReference type="STRING" id="3702.Q56X76"/>
<dbReference type="iPTMnet" id="Q56X76"/>
<dbReference type="PaxDb" id="3702-AT4G09730.1"/>
<dbReference type="ProteomicsDB" id="236263"/>
<dbReference type="EnsemblPlants" id="AT4G09730.1">
    <property type="protein sequence ID" value="AT4G09730.1"/>
    <property type="gene ID" value="AT4G09730"/>
</dbReference>
<dbReference type="GeneID" id="826559"/>
<dbReference type="Gramene" id="AT4G09730.1">
    <property type="protein sequence ID" value="AT4G09730.1"/>
    <property type="gene ID" value="AT4G09730"/>
</dbReference>
<dbReference type="KEGG" id="ath:AT4G09730"/>
<dbReference type="Araport" id="AT4G09730"/>
<dbReference type="TAIR" id="AT4G09730">
    <property type="gene designation" value="RH39"/>
</dbReference>
<dbReference type="eggNOG" id="KOG0331">
    <property type="taxonomic scope" value="Eukaryota"/>
</dbReference>
<dbReference type="HOGENOM" id="CLU_003041_1_3_1"/>
<dbReference type="InParanoid" id="Q56X76"/>
<dbReference type="OMA" id="VFRVSKF"/>
<dbReference type="OrthoDB" id="10256233at2759"/>
<dbReference type="PhylomeDB" id="Q56X76"/>
<dbReference type="PRO" id="PR:Q56X76"/>
<dbReference type="Proteomes" id="UP000006548">
    <property type="component" value="Chromosome 4"/>
</dbReference>
<dbReference type="ExpressionAtlas" id="Q56X76">
    <property type="expression patterns" value="baseline and differential"/>
</dbReference>
<dbReference type="GO" id="GO:0009507">
    <property type="term" value="C:chloroplast"/>
    <property type="evidence" value="ECO:0007005"/>
    <property type="project" value="TAIR"/>
</dbReference>
<dbReference type="GO" id="GO:0005524">
    <property type="term" value="F:ATP binding"/>
    <property type="evidence" value="ECO:0007669"/>
    <property type="project" value="UniProtKB-KW"/>
</dbReference>
<dbReference type="GO" id="GO:0016887">
    <property type="term" value="F:ATP hydrolysis activity"/>
    <property type="evidence" value="ECO:0000314"/>
    <property type="project" value="TAIR"/>
</dbReference>
<dbReference type="GO" id="GO:0070180">
    <property type="term" value="F:large ribosomal subunit rRNA binding"/>
    <property type="evidence" value="ECO:0000314"/>
    <property type="project" value="TAIR"/>
</dbReference>
<dbReference type="GO" id="GO:0003729">
    <property type="term" value="F:mRNA binding"/>
    <property type="evidence" value="ECO:0000314"/>
    <property type="project" value="TAIR"/>
</dbReference>
<dbReference type="GO" id="GO:0003724">
    <property type="term" value="F:RNA helicase activity"/>
    <property type="evidence" value="ECO:0007669"/>
    <property type="project" value="UniProtKB-EC"/>
</dbReference>
<dbReference type="GO" id="GO:1901259">
    <property type="term" value="P:chloroplast rRNA processing"/>
    <property type="evidence" value="ECO:0000315"/>
    <property type="project" value="TAIR"/>
</dbReference>
<dbReference type="GO" id="GO:0110102">
    <property type="term" value="P:ribulose bisphosphate carboxylase complex assembly"/>
    <property type="evidence" value="ECO:0000315"/>
    <property type="project" value="TAIR"/>
</dbReference>
<dbReference type="CDD" id="cd00268">
    <property type="entry name" value="DEADc"/>
    <property type="match status" value="1"/>
</dbReference>
<dbReference type="CDD" id="cd18787">
    <property type="entry name" value="SF2_C_DEAD"/>
    <property type="match status" value="1"/>
</dbReference>
<dbReference type="FunFam" id="3.40.50.300:FF:002781">
    <property type="entry name" value="DEAD-box ATP-dependent RNA helicase 39"/>
    <property type="match status" value="1"/>
</dbReference>
<dbReference type="FunFam" id="3.40.50.300:FF:002944">
    <property type="entry name" value="DEAD-box ATP-dependent RNA helicase 39"/>
    <property type="match status" value="1"/>
</dbReference>
<dbReference type="Gene3D" id="3.40.50.300">
    <property type="entry name" value="P-loop containing nucleotide triphosphate hydrolases"/>
    <property type="match status" value="2"/>
</dbReference>
<dbReference type="InterPro" id="IPR011545">
    <property type="entry name" value="DEAD/DEAH_box_helicase_dom"/>
</dbReference>
<dbReference type="InterPro" id="IPR014001">
    <property type="entry name" value="Helicase_ATP-bd"/>
</dbReference>
<dbReference type="InterPro" id="IPR001650">
    <property type="entry name" value="Helicase_C-like"/>
</dbReference>
<dbReference type="InterPro" id="IPR027417">
    <property type="entry name" value="P-loop_NTPase"/>
</dbReference>
<dbReference type="InterPro" id="IPR014014">
    <property type="entry name" value="RNA_helicase_DEAD_Q_motif"/>
</dbReference>
<dbReference type="PANTHER" id="PTHR47960">
    <property type="entry name" value="DEAD-BOX ATP-DEPENDENT RNA HELICASE 50"/>
    <property type="match status" value="1"/>
</dbReference>
<dbReference type="Pfam" id="PF00270">
    <property type="entry name" value="DEAD"/>
    <property type="match status" value="1"/>
</dbReference>
<dbReference type="Pfam" id="PF00271">
    <property type="entry name" value="Helicase_C"/>
    <property type="match status" value="1"/>
</dbReference>
<dbReference type="SMART" id="SM00487">
    <property type="entry name" value="DEXDc"/>
    <property type="match status" value="1"/>
</dbReference>
<dbReference type="SMART" id="SM00490">
    <property type="entry name" value="HELICc"/>
    <property type="match status" value="1"/>
</dbReference>
<dbReference type="SUPFAM" id="SSF52540">
    <property type="entry name" value="P-loop containing nucleoside triphosphate hydrolases"/>
    <property type="match status" value="1"/>
</dbReference>
<dbReference type="PROSITE" id="PS51192">
    <property type="entry name" value="HELICASE_ATP_BIND_1"/>
    <property type="match status" value="1"/>
</dbReference>
<dbReference type="PROSITE" id="PS51194">
    <property type="entry name" value="HELICASE_CTER"/>
    <property type="match status" value="1"/>
</dbReference>
<dbReference type="PROSITE" id="PS51195">
    <property type="entry name" value="Q_MOTIF"/>
    <property type="match status" value="1"/>
</dbReference>
<keyword id="KW-0067">ATP-binding</keyword>
<keyword id="KW-0347">Helicase</keyword>
<keyword id="KW-0378">Hydrolase</keyword>
<keyword id="KW-0547">Nucleotide-binding</keyword>
<keyword id="KW-1185">Reference proteome</keyword>
<keyword id="KW-0694">RNA-binding</keyword>
<name>RH39_ARATH</name>
<sequence>MVGASRTILSLSLSSSLFTFSKIPHVFPFLRLHKPRFHHAFRPLYSAAATTSSPTTETNVTDPDQLKHTILLERLRLRHLKESAKPPQQRPSSVVGVEEESSIRKKSKKLVENFQELGLSEEVMGALQELNIEVPTEIQCIGIPAVMERKSVVLGSHTGSGKTLAYLLPIVQLMREDEANLGKKTKPRRPRTVVLCPTRELSEQVYRVAKSISHHARFRSILVSGGSRIRPQEDSLNNAIDMVVGTPGRILQHIEEGNMVYGDIAYLVLDEADTMFDRGFGPEIRKFLAPLNQRALKTNDQGFQTVLVTATMTMAVQKLVDEEFQGIEHLRTSTLHKKIANARHDFIKLSGGEDKLEALLQVLEPSLAKGSKVMVFCNTLNSSRAVDHYLSENQISTVNYHGEVPAEQRVENLKKFKDEEGDCPTLVCTDLAARGLDLDVDHVVMFDFPKNSIDYLHRTGRTARMGAKGKVTSLVSRKDQMLAARIEEAMRNNESLESLTTDNVRRDAARTHITQEKGRSVKQIREVSKQRNSRDKPSSSSPPARSTGGKTPVRKSSSSSFSKPRKASSPPEKSSKPKRKILKTVGSRSIAARGKTGSDRRPGKKLSVVGFRGKSSSARAS</sequence>
<gene>
    <name type="primary">RH39</name>
    <name type="ordered locus">At4g09730</name>
    <name type="ORF">F17A8.80</name>
</gene>
<proteinExistence type="evidence at transcript level"/>
<evidence type="ECO:0000255" key="1">
    <source>
        <dbReference type="PROSITE-ProRule" id="PRU00541"/>
    </source>
</evidence>
<evidence type="ECO:0000255" key="2">
    <source>
        <dbReference type="PROSITE-ProRule" id="PRU00542"/>
    </source>
</evidence>
<evidence type="ECO:0000256" key="3">
    <source>
        <dbReference type="SAM" id="MobiDB-lite"/>
    </source>
</evidence>
<evidence type="ECO:0000305" key="4"/>
<accession>Q56X76</accession>
<accession>Q682L4</accession>
<accession>Q6NQ85</accession>
<accession>Q9SZ89</accession>
<feature type="chain" id="PRO_0000239179" description="DEAD-box ATP-dependent RNA helicase 39">
    <location>
        <begin position="1"/>
        <end position="621"/>
    </location>
</feature>
<feature type="domain" description="Helicase ATP-binding" evidence="1">
    <location>
        <begin position="143"/>
        <end position="330"/>
    </location>
</feature>
<feature type="domain" description="Helicase C-terminal" evidence="2">
    <location>
        <begin position="355"/>
        <end position="505"/>
    </location>
</feature>
<feature type="region of interest" description="Disordered" evidence="3">
    <location>
        <begin position="497"/>
        <end position="621"/>
    </location>
</feature>
<feature type="short sequence motif" description="Q motif">
    <location>
        <begin position="112"/>
        <end position="140"/>
    </location>
</feature>
<feature type="short sequence motif" description="DEAD box">
    <location>
        <begin position="270"/>
        <end position="273"/>
    </location>
</feature>
<feature type="compositionally biased region" description="Basic and acidic residues" evidence="3">
    <location>
        <begin position="503"/>
        <end position="537"/>
    </location>
</feature>
<feature type="compositionally biased region" description="Low complexity" evidence="3">
    <location>
        <begin position="555"/>
        <end position="572"/>
    </location>
</feature>
<feature type="binding site" evidence="1">
    <location>
        <begin position="156"/>
        <end position="163"/>
    </location>
    <ligand>
        <name>ATP</name>
        <dbReference type="ChEBI" id="CHEBI:30616"/>
    </ligand>
</feature>
<feature type="sequence conflict" description="In Ref. 4; BAD43116." evidence="4" ref="4">
    <original>V</original>
    <variation>A</variation>
    <location>
        <position position="244"/>
    </location>
</feature>